<evidence type="ECO:0000250" key="1"/>
<evidence type="ECO:0000255" key="2"/>
<evidence type="ECO:0000255" key="3">
    <source>
        <dbReference type="PROSITE-ProRule" id="PRU00040"/>
    </source>
</evidence>
<evidence type="ECO:0000255" key="4">
    <source>
        <dbReference type="PROSITE-ProRule" id="PRU00076"/>
    </source>
</evidence>
<evidence type="ECO:0000255" key="5">
    <source>
        <dbReference type="PROSITE-ProRule" id="PRU00302"/>
    </source>
</evidence>
<evidence type="ECO:0000255" key="6">
    <source>
        <dbReference type="PROSITE-ProRule" id="PRU00323"/>
    </source>
</evidence>
<evidence type="ECO:0000256" key="7">
    <source>
        <dbReference type="SAM" id="MobiDB-lite"/>
    </source>
</evidence>
<evidence type="ECO:0000269" key="8">
    <source>
    </source>
</evidence>
<evidence type="ECO:0000269" key="9">
    <source>
    </source>
</evidence>
<evidence type="ECO:0000269" key="10">
    <source>
    </source>
</evidence>
<evidence type="ECO:0000305" key="11"/>
<reference key="1">
    <citation type="journal article" date="1998" name="Gene">
        <title>Characterization of the human neurocan gene, CSPG3.</title>
        <authorList>
            <person name="Prange C.K."/>
            <person name="Pennacchio L.A."/>
            <person name="Lieuallen K."/>
            <person name="Fan W."/>
            <person name="Lennon G.G."/>
        </authorList>
    </citation>
    <scope>NUCLEOTIDE SEQUENCE [MRNA]</scope>
    <scope>VARIANT VAL-1254</scope>
</reference>
<reference key="2">
    <citation type="journal article" date="2004" name="Nature">
        <title>The DNA sequence and biology of human chromosome 19.</title>
        <authorList>
            <person name="Grimwood J."/>
            <person name="Gordon L.A."/>
            <person name="Olsen A.S."/>
            <person name="Terry A."/>
            <person name="Schmutz J."/>
            <person name="Lamerdin J.E."/>
            <person name="Hellsten U."/>
            <person name="Goodstein D."/>
            <person name="Couronne O."/>
            <person name="Tran-Gyamfi M."/>
            <person name="Aerts A."/>
            <person name="Altherr M."/>
            <person name="Ashworth L."/>
            <person name="Bajorek E."/>
            <person name="Black S."/>
            <person name="Branscomb E."/>
            <person name="Caenepeel S."/>
            <person name="Carrano A.V."/>
            <person name="Caoile C."/>
            <person name="Chan Y.M."/>
            <person name="Christensen M."/>
            <person name="Cleland C.A."/>
            <person name="Copeland A."/>
            <person name="Dalin E."/>
            <person name="Dehal P."/>
            <person name="Denys M."/>
            <person name="Detter J.C."/>
            <person name="Escobar J."/>
            <person name="Flowers D."/>
            <person name="Fotopulos D."/>
            <person name="Garcia C."/>
            <person name="Georgescu A.M."/>
            <person name="Glavina T."/>
            <person name="Gomez M."/>
            <person name="Gonzales E."/>
            <person name="Groza M."/>
            <person name="Hammon N."/>
            <person name="Hawkins T."/>
            <person name="Haydu L."/>
            <person name="Ho I."/>
            <person name="Huang W."/>
            <person name="Israni S."/>
            <person name="Jett J."/>
            <person name="Kadner K."/>
            <person name="Kimball H."/>
            <person name="Kobayashi A."/>
            <person name="Larionov V."/>
            <person name="Leem S.-H."/>
            <person name="Lopez F."/>
            <person name="Lou Y."/>
            <person name="Lowry S."/>
            <person name="Malfatti S."/>
            <person name="Martinez D."/>
            <person name="McCready P.M."/>
            <person name="Medina C."/>
            <person name="Morgan J."/>
            <person name="Nelson K."/>
            <person name="Nolan M."/>
            <person name="Ovcharenko I."/>
            <person name="Pitluck S."/>
            <person name="Pollard M."/>
            <person name="Popkie A.P."/>
            <person name="Predki P."/>
            <person name="Quan G."/>
            <person name="Ramirez L."/>
            <person name="Rash S."/>
            <person name="Retterer J."/>
            <person name="Rodriguez A."/>
            <person name="Rogers S."/>
            <person name="Salamov A."/>
            <person name="Salazar A."/>
            <person name="She X."/>
            <person name="Smith D."/>
            <person name="Slezak T."/>
            <person name="Solovyev V."/>
            <person name="Thayer N."/>
            <person name="Tice H."/>
            <person name="Tsai M."/>
            <person name="Ustaszewska A."/>
            <person name="Vo N."/>
            <person name="Wagner M."/>
            <person name="Wheeler J."/>
            <person name="Wu K."/>
            <person name="Xie G."/>
            <person name="Yang J."/>
            <person name="Dubchak I."/>
            <person name="Furey T.S."/>
            <person name="DeJong P."/>
            <person name="Dickson M."/>
            <person name="Gordon D."/>
            <person name="Eichler E.E."/>
            <person name="Pennacchio L.A."/>
            <person name="Richardson P."/>
            <person name="Stubbs L."/>
            <person name="Rokhsar D.S."/>
            <person name="Myers R.M."/>
            <person name="Rubin E.M."/>
            <person name="Lucas S.M."/>
        </authorList>
    </citation>
    <scope>NUCLEOTIDE SEQUENCE [LARGE SCALE GENOMIC DNA]</scope>
</reference>
<reference key="3">
    <citation type="journal article" date="2013" name="J. Proteome Res.">
        <title>LC-MS/MS characterization of O-glycosylation sites and glycan structures of human cerebrospinal fluid glycoproteins.</title>
        <authorList>
            <person name="Halim A."/>
            <person name="Ruetschi U."/>
            <person name="Larson G."/>
            <person name="Nilsson J."/>
        </authorList>
    </citation>
    <scope>GLYCOSYLATION</scope>
    <scope>IDENTIFICATION BY MASS SPECTROMETRY</scope>
</reference>
<reference key="4">
    <citation type="journal article" date="2015" name="Mol. Cell. Proteomics">
        <title>Identification of chondroitin sulfate linkage region glycopeptides reveals prohormones as a novel class of proteoglycans.</title>
        <authorList>
            <person name="Noborn F."/>
            <person name="Gomez Toledo A."/>
            <person name="Sihlbom C."/>
            <person name="Lengqvist J."/>
            <person name="Fries E."/>
            <person name="Kjellen L."/>
            <person name="Nilsson J."/>
            <person name="Larson G."/>
        </authorList>
    </citation>
    <scope>SUBCELLULAR LOCATION</scope>
    <scope>TISSUE SPECIFICITY</scope>
    <scope>GLYCOSYLATION AT SER-381 AND SER-411</scope>
</reference>
<gene>
    <name type="primary">NCAN</name>
    <name type="synonym">CSPG3</name>
    <name type="synonym">NEUR</name>
</gene>
<comment type="function">
    <text>May modulate neuronal adhesion and neurite growth during development by binding to neural cell adhesion molecules (NG-CAM and N-CAM). Chondroitin sulfate proteoglycan; binds to hyaluronic acid.</text>
</comment>
<comment type="subcellular location">
    <subcellularLocation>
        <location evidence="9">Secreted</location>
    </subcellularLocation>
</comment>
<comment type="tissue specificity">
    <text evidence="9">Detected in cerebrospinal fluid (at protein level) (PubMed:25326458). Brain.</text>
</comment>
<comment type="PTM">
    <text evidence="8 9">O-glycosylated; contains chondroitin sulfate.</text>
</comment>
<comment type="similarity">
    <text evidence="11">Belongs to the aggrecan/versican proteoglycan family.</text>
</comment>
<comment type="online information" name="Functional Glycomics Gateway - Glycan Binding">
    <link uri="http://www.functionalglycomics.org/glycomics/GBPServlet?&amp;operationType=view&amp;cbpId=cbp_hum_Ctlect_213"/>
    <text>Neurocan</text>
</comment>
<feature type="signal peptide" evidence="2">
    <location>
        <begin position="1"/>
        <end position="22"/>
    </location>
</feature>
<feature type="chain" id="PRO_0000017516" description="Neurocan core protein">
    <location>
        <begin position="23"/>
        <end position="1321"/>
    </location>
</feature>
<feature type="domain" description="Ig-like V-type">
    <location>
        <begin position="38"/>
        <end position="153"/>
    </location>
</feature>
<feature type="domain" description="Link 1" evidence="6">
    <location>
        <begin position="160"/>
        <end position="255"/>
    </location>
</feature>
<feature type="domain" description="Link 2" evidence="6">
    <location>
        <begin position="259"/>
        <end position="357"/>
    </location>
</feature>
<feature type="domain" description="EGF-like 1" evidence="4">
    <location>
        <begin position="1008"/>
        <end position="1044"/>
    </location>
</feature>
<feature type="domain" description="EGF-like 2; calcium-binding" evidence="4">
    <location>
        <begin position="1046"/>
        <end position="1082"/>
    </location>
</feature>
<feature type="domain" description="C-type lectin" evidence="3">
    <location>
        <begin position="1084"/>
        <end position="1213"/>
    </location>
</feature>
<feature type="domain" description="Sushi" evidence="5">
    <location>
        <begin position="1213"/>
        <end position="1273"/>
    </location>
</feature>
<feature type="region of interest" description="Disordered" evidence="7">
    <location>
        <begin position="362"/>
        <end position="414"/>
    </location>
</feature>
<feature type="region of interest" description="Disordered" evidence="7">
    <location>
        <begin position="456"/>
        <end position="479"/>
    </location>
</feature>
<feature type="region of interest" description="Disordered" evidence="7">
    <location>
        <begin position="494"/>
        <end position="513"/>
    </location>
</feature>
<feature type="region of interest" description="Disordered" evidence="7">
    <location>
        <begin position="532"/>
        <end position="579"/>
    </location>
</feature>
<feature type="region of interest" description="Disordered" evidence="7">
    <location>
        <begin position="682"/>
        <end position="731"/>
    </location>
</feature>
<feature type="region of interest" description="O-glycosylated at one site">
    <location>
        <begin position="708"/>
        <end position="712"/>
    </location>
</feature>
<feature type="region of interest" description="Disordered" evidence="7">
    <location>
        <begin position="820"/>
        <end position="844"/>
    </location>
</feature>
<feature type="region of interest" description="Disordered" evidence="7">
    <location>
        <begin position="876"/>
        <end position="955"/>
    </location>
</feature>
<feature type="region of interest" description="Disordered" evidence="7">
    <location>
        <begin position="1275"/>
        <end position="1321"/>
    </location>
</feature>
<feature type="compositionally biased region" description="Polar residues" evidence="7">
    <location>
        <begin position="363"/>
        <end position="373"/>
    </location>
</feature>
<feature type="compositionally biased region" description="Polar residues" evidence="7">
    <location>
        <begin position="722"/>
        <end position="731"/>
    </location>
</feature>
<feature type="compositionally biased region" description="Polar residues" evidence="7">
    <location>
        <begin position="906"/>
        <end position="922"/>
    </location>
</feature>
<feature type="compositionally biased region" description="Low complexity" evidence="7">
    <location>
        <begin position="935"/>
        <end position="948"/>
    </location>
</feature>
<feature type="compositionally biased region" description="Basic residues" evidence="7">
    <location>
        <begin position="1275"/>
        <end position="1308"/>
    </location>
</feature>
<feature type="compositionally biased region" description="Basic and acidic residues" evidence="7">
    <location>
        <begin position="1309"/>
        <end position="1321"/>
    </location>
</feature>
<feature type="glycosylation site" description="N-linked (GlcNAc...) asparagine" evidence="2">
    <location>
        <position position="122"/>
    </location>
</feature>
<feature type="glycosylation site" description="N-linked (GlcNAc...) asparagine" evidence="2">
    <location>
        <position position="340"/>
    </location>
</feature>
<feature type="glycosylation site" description="O-linked (Xyl...) (chondroitin sulfate) serine" evidence="9">
    <location>
        <position position="381"/>
    </location>
</feature>
<feature type="glycosylation site" description="O-linked (Xyl...) (chondroitin sulfate) serine" evidence="9">
    <location>
        <position position="411"/>
    </location>
</feature>
<feature type="glycosylation site" description="N-linked (GlcNAc...) asparagine" evidence="2">
    <location>
        <position position="1026"/>
    </location>
</feature>
<feature type="glycosylation site" description="N-linked (GlcNAc...) asparagine" evidence="2">
    <location>
        <position position="1223"/>
    </location>
</feature>
<feature type="disulfide bond" evidence="1">
    <location>
        <begin position="59"/>
        <end position="140"/>
    </location>
</feature>
<feature type="disulfide bond" evidence="1">
    <location>
        <begin position="182"/>
        <end position="253"/>
    </location>
</feature>
<feature type="disulfide bond" evidence="1">
    <location>
        <begin position="206"/>
        <end position="227"/>
    </location>
</feature>
<feature type="disulfide bond" evidence="1">
    <location>
        <begin position="280"/>
        <end position="355"/>
    </location>
</feature>
<feature type="disulfide bond" evidence="1">
    <location>
        <begin position="304"/>
        <end position="325"/>
    </location>
</feature>
<feature type="disulfide bond" evidence="1">
    <location>
        <begin position="1012"/>
        <end position="1023"/>
    </location>
</feature>
<feature type="disulfide bond" evidence="1">
    <location>
        <begin position="1017"/>
        <end position="1032"/>
    </location>
</feature>
<feature type="disulfide bond" evidence="1">
    <location>
        <begin position="1034"/>
        <end position="1043"/>
    </location>
</feature>
<feature type="disulfide bond" evidence="1">
    <location>
        <begin position="1050"/>
        <end position="1061"/>
    </location>
</feature>
<feature type="disulfide bond" evidence="1">
    <location>
        <begin position="1055"/>
        <end position="1070"/>
    </location>
</feature>
<feature type="disulfide bond" evidence="1">
    <location>
        <begin position="1072"/>
        <end position="1081"/>
    </location>
</feature>
<feature type="disulfide bond" evidence="1">
    <location>
        <begin position="1088"/>
        <end position="1099"/>
    </location>
</feature>
<feature type="disulfide bond" evidence="1">
    <location>
        <begin position="1116"/>
        <end position="1208"/>
    </location>
</feature>
<feature type="disulfide bond" evidence="1">
    <location>
        <begin position="1184"/>
        <end position="1200"/>
    </location>
</feature>
<feature type="disulfide bond" evidence="1">
    <location>
        <begin position="1215"/>
        <end position="1258"/>
    </location>
</feature>
<feature type="disulfide bond" evidence="1">
    <location>
        <begin position="1244"/>
        <end position="1271"/>
    </location>
</feature>
<feature type="sequence variant" id="VAR_024521" description="In dbSNP:rs2228601.">
    <original>A</original>
    <variation>T</variation>
    <location>
        <position position="70"/>
    </location>
</feature>
<feature type="sequence variant" id="VAR_020213" description="In dbSNP:rs2228603.">
    <original>P</original>
    <variation>S</variation>
    <location>
        <position position="92"/>
    </location>
</feature>
<feature type="sequence variant" id="VAR_016176" description="In dbSNP:rs1064389." evidence="10">
    <original>A</original>
    <variation>V</variation>
    <location>
        <position position="1254"/>
    </location>
</feature>
<feature type="sequence conflict" description="In Ref. 1; AAC80576." evidence="11" ref="1">
    <original>Y</original>
    <variation>N</variation>
    <location>
        <position position="1234"/>
    </location>
</feature>
<feature type="sequence conflict" description="In Ref. 1; AAC80576." evidence="11" ref="1">
    <original>R</original>
    <variation>G</variation>
    <location>
        <position position="1282"/>
    </location>
</feature>
<proteinExistence type="evidence at protein level"/>
<dbReference type="EMBL" id="AF026547">
    <property type="protein sequence ID" value="AAC80576.1"/>
    <property type="molecule type" value="mRNA"/>
</dbReference>
<dbReference type="EMBL" id="AC003110">
    <property type="protein sequence ID" value="AAB86655.1"/>
    <property type="molecule type" value="Genomic_DNA"/>
</dbReference>
<dbReference type="EMBL" id="AC005254">
    <property type="protein sequence ID" value="AAC25581.1"/>
    <property type="molecule type" value="Genomic_DNA"/>
</dbReference>
<dbReference type="CCDS" id="CCDS12397.1"/>
<dbReference type="RefSeq" id="NP_004377.2">
    <property type="nucleotide sequence ID" value="NM_004386.3"/>
</dbReference>
<dbReference type="SMR" id="O14594"/>
<dbReference type="BioGRID" id="107845">
    <property type="interactions" value="14"/>
</dbReference>
<dbReference type="FunCoup" id="O14594">
    <property type="interactions" value="28"/>
</dbReference>
<dbReference type="IntAct" id="O14594">
    <property type="interactions" value="3"/>
</dbReference>
<dbReference type="STRING" id="9606.ENSP00000252575"/>
<dbReference type="DrugBank" id="DB02379">
    <property type="generic name" value="Beta-D-Glucose"/>
</dbReference>
<dbReference type="DrugBank" id="DB08818">
    <property type="generic name" value="Hyaluronic acid"/>
</dbReference>
<dbReference type="DrugBank" id="DB04396">
    <property type="generic name" value="Thiodigalactoside"/>
</dbReference>
<dbReference type="GlyConnect" id="1550">
    <property type="glycosylation" value="14 N-Linked glycans (1 site)"/>
</dbReference>
<dbReference type="GlyCosmos" id="O14594">
    <property type="glycosylation" value="7 sites, 20 glycans"/>
</dbReference>
<dbReference type="GlyGen" id="O14594">
    <property type="glycosylation" value="13 sites, 19 N-linked glycans (1 site), 2 O-linked glycans (3 sites)"/>
</dbReference>
<dbReference type="iPTMnet" id="O14594"/>
<dbReference type="PhosphoSitePlus" id="O14594"/>
<dbReference type="BioMuta" id="NCAN"/>
<dbReference type="jPOST" id="O14594"/>
<dbReference type="MassIVE" id="O14594"/>
<dbReference type="PaxDb" id="9606-ENSP00000252575"/>
<dbReference type="PeptideAtlas" id="O14594"/>
<dbReference type="Antibodypedia" id="28403">
    <property type="antibodies" value="207 antibodies from 32 providers"/>
</dbReference>
<dbReference type="DNASU" id="1463"/>
<dbReference type="Ensembl" id="ENST00000252575.11">
    <property type="protein sequence ID" value="ENSP00000252575.4"/>
    <property type="gene ID" value="ENSG00000130287.14"/>
</dbReference>
<dbReference type="GeneID" id="1463"/>
<dbReference type="KEGG" id="hsa:1463"/>
<dbReference type="MANE-Select" id="ENST00000252575.11">
    <property type="protein sequence ID" value="ENSP00000252575.4"/>
    <property type="RefSeq nucleotide sequence ID" value="NM_004386.3"/>
    <property type="RefSeq protein sequence ID" value="NP_004377.2"/>
</dbReference>
<dbReference type="UCSC" id="uc002nlz.4">
    <property type="organism name" value="human"/>
</dbReference>
<dbReference type="AGR" id="HGNC:2465"/>
<dbReference type="CTD" id="1463"/>
<dbReference type="DisGeNET" id="1463"/>
<dbReference type="GeneCards" id="NCAN"/>
<dbReference type="HGNC" id="HGNC:2465">
    <property type="gene designation" value="NCAN"/>
</dbReference>
<dbReference type="HPA" id="ENSG00000130287">
    <property type="expression patterns" value="Tissue enriched (brain)"/>
</dbReference>
<dbReference type="MIM" id="600826">
    <property type="type" value="gene"/>
</dbReference>
<dbReference type="neXtProt" id="NX_O14594"/>
<dbReference type="OpenTargets" id="ENSG00000130287"/>
<dbReference type="PharmGKB" id="PA162396986"/>
<dbReference type="VEuPathDB" id="HostDB:ENSG00000130287"/>
<dbReference type="eggNOG" id="ENOG502QQ78">
    <property type="taxonomic scope" value="Eukaryota"/>
</dbReference>
<dbReference type="GeneTree" id="ENSGT00940000158649"/>
<dbReference type="HOGENOM" id="CLU_000303_0_1_1"/>
<dbReference type="InParanoid" id="O14594"/>
<dbReference type="OMA" id="HESGHWN"/>
<dbReference type="OrthoDB" id="441660at2759"/>
<dbReference type="PAN-GO" id="O14594">
    <property type="GO annotations" value="3 GO annotations based on evolutionary models"/>
</dbReference>
<dbReference type="PhylomeDB" id="O14594"/>
<dbReference type="TreeFam" id="TF332134"/>
<dbReference type="PathwayCommons" id="O14594"/>
<dbReference type="Reactome" id="R-HSA-1971475">
    <property type="pathway name" value="A tetrasaccharide linker sequence is required for GAG synthesis"/>
</dbReference>
<dbReference type="Reactome" id="R-HSA-2022870">
    <property type="pathway name" value="Chondroitin sulfate biosynthesis"/>
</dbReference>
<dbReference type="Reactome" id="R-HSA-2022923">
    <property type="pathway name" value="Dermatan sulfate biosynthesis"/>
</dbReference>
<dbReference type="Reactome" id="R-HSA-2024101">
    <property type="pathway name" value="CS/DS degradation"/>
</dbReference>
<dbReference type="Reactome" id="R-HSA-3000178">
    <property type="pathway name" value="ECM proteoglycans"/>
</dbReference>
<dbReference type="Reactome" id="R-HSA-3560783">
    <property type="pathway name" value="Defective B4GALT7 causes EDS, progeroid type"/>
</dbReference>
<dbReference type="Reactome" id="R-HSA-3560801">
    <property type="pathway name" value="Defective B3GAT3 causes JDSSDHD"/>
</dbReference>
<dbReference type="Reactome" id="R-HSA-3595172">
    <property type="pathway name" value="Defective CHST3 causes SEDCJD"/>
</dbReference>
<dbReference type="Reactome" id="R-HSA-3595174">
    <property type="pathway name" value="Defective CHST14 causes EDS, musculocontractural type"/>
</dbReference>
<dbReference type="Reactome" id="R-HSA-3595177">
    <property type="pathway name" value="Defective CHSY1 causes TPBS"/>
</dbReference>
<dbReference type="Reactome" id="R-HSA-373760">
    <property type="pathway name" value="L1CAM interactions"/>
</dbReference>
<dbReference type="Reactome" id="R-HSA-419037">
    <property type="pathway name" value="NCAM1 interactions"/>
</dbReference>
<dbReference type="Reactome" id="R-HSA-4420332">
    <property type="pathway name" value="Defective B3GALT6 causes EDSP2 and SEMDJL1"/>
</dbReference>
<dbReference type="SignaLink" id="O14594"/>
<dbReference type="BioGRID-ORCS" id="1463">
    <property type="hits" value="17 hits in 1145 CRISPR screens"/>
</dbReference>
<dbReference type="CD-CODE" id="FB4E32DD">
    <property type="entry name" value="Presynaptic clusters and postsynaptic densities"/>
</dbReference>
<dbReference type="ChiTaRS" id="NCAN">
    <property type="organism name" value="human"/>
</dbReference>
<dbReference type="GeneWiki" id="Neurocan"/>
<dbReference type="GenomeRNAi" id="1463"/>
<dbReference type="Pharos" id="O14594">
    <property type="development level" value="Tbio"/>
</dbReference>
<dbReference type="PRO" id="PR:O14594"/>
<dbReference type="Proteomes" id="UP000005640">
    <property type="component" value="Chromosome 19"/>
</dbReference>
<dbReference type="RNAct" id="O14594">
    <property type="molecule type" value="protein"/>
</dbReference>
<dbReference type="Bgee" id="ENSG00000130287">
    <property type="expression patterns" value="Expressed in ventricular zone and 92 other cell types or tissues"/>
</dbReference>
<dbReference type="ExpressionAtlas" id="O14594">
    <property type="expression patterns" value="baseline and differential"/>
</dbReference>
<dbReference type="GO" id="GO:0005576">
    <property type="term" value="C:extracellular region"/>
    <property type="evidence" value="ECO:0000304"/>
    <property type="project" value="Reactome"/>
</dbReference>
<dbReference type="GO" id="GO:0005615">
    <property type="term" value="C:extracellular space"/>
    <property type="evidence" value="ECO:0000318"/>
    <property type="project" value="GO_Central"/>
</dbReference>
<dbReference type="GO" id="GO:0005796">
    <property type="term" value="C:Golgi lumen"/>
    <property type="evidence" value="ECO:0000304"/>
    <property type="project" value="Reactome"/>
</dbReference>
<dbReference type="GO" id="GO:0043202">
    <property type="term" value="C:lysosomal lumen"/>
    <property type="evidence" value="ECO:0000304"/>
    <property type="project" value="Reactome"/>
</dbReference>
<dbReference type="GO" id="GO:0072534">
    <property type="term" value="C:perineuronal net"/>
    <property type="evidence" value="ECO:0000318"/>
    <property type="project" value="GO_Central"/>
</dbReference>
<dbReference type="GO" id="GO:0045202">
    <property type="term" value="C:synapse"/>
    <property type="evidence" value="ECO:0000318"/>
    <property type="project" value="GO_Central"/>
</dbReference>
<dbReference type="GO" id="GO:0005509">
    <property type="term" value="F:calcium ion binding"/>
    <property type="evidence" value="ECO:0007669"/>
    <property type="project" value="InterPro"/>
</dbReference>
<dbReference type="GO" id="GO:0030246">
    <property type="term" value="F:carbohydrate binding"/>
    <property type="evidence" value="ECO:0007669"/>
    <property type="project" value="UniProtKB-KW"/>
</dbReference>
<dbReference type="GO" id="GO:0005540">
    <property type="term" value="F:hyaluronic acid binding"/>
    <property type="evidence" value="ECO:0007669"/>
    <property type="project" value="UniProtKB-KW"/>
</dbReference>
<dbReference type="GO" id="GO:0007155">
    <property type="term" value="P:cell adhesion"/>
    <property type="evidence" value="ECO:0007669"/>
    <property type="project" value="UniProtKB-KW"/>
</dbReference>
<dbReference type="GO" id="GO:0007417">
    <property type="term" value="P:central nervous system development"/>
    <property type="evidence" value="ECO:0000318"/>
    <property type="project" value="GO_Central"/>
</dbReference>
<dbReference type="GO" id="GO:0001501">
    <property type="term" value="P:skeletal system development"/>
    <property type="evidence" value="ECO:0000318"/>
    <property type="project" value="GO_Central"/>
</dbReference>
<dbReference type="CDD" id="cd00033">
    <property type="entry name" value="CCP"/>
    <property type="match status" value="1"/>
</dbReference>
<dbReference type="CDD" id="cd00054">
    <property type="entry name" value="EGF_CA"/>
    <property type="match status" value="2"/>
</dbReference>
<dbReference type="CDD" id="cd05902">
    <property type="entry name" value="Ig_Neurocan"/>
    <property type="match status" value="1"/>
</dbReference>
<dbReference type="CDD" id="cd03517">
    <property type="entry name" value="Link_domain_CSPGs_modules_1_3"/>
    <property type="match status" value="1"/>
</dbReference>
<dbReference type="CDD" id="cd03520">
    <property type="entry name" value="Link_domain_CSPGs_modules_2_4"/>
    <property type="match status" value="1"/>
</dbReference>
<dbReference type="FunFam" id="3.10.100.10:FF:000011">
    <property type="entry name" value="Aggrecan core protein"/>
    <property type="match status" value="1"/>
</dbReference>
<dbReference type="FunFam" id="3.10.100.10:FF:000002">
    <property type="entry name" value="Hyaluronan proteoglycan link protein 1"/>
    <property type="match status" value="1"/>
</dbReference>
<dbReference type="FunFam" id="2.10.25.10:FF:000573">
    <property type="entry name" value="Neurocan core protein"/>
    <property type="match status" value="1"/>
</dbReference>
<dbReference type="FunFam" id="2.60.40.10:FF:000571">
    <property type="entry name" value="Neurocan core protein"/>
    <property type="match status" value="1"/>
</dbReference>
<dbReference type="FunFam" id="2.10.70.10:FF:000003">
    <property type="entry name" value="Versican core protein"/>
    <property type="match status" value="1"/>
</dbReference>
<dbReference type="FunFam" id="3.10.100.10:FF:000003">
    <property type="entry name" value="Versican core protein"/>
    <property type="match status" value="1"/>
</dbReference>
<dbReference type="FunFam" id="2.10.25.10:FF:000006">
    <property type="entry name" value="Versican core protein-like isoform 1"/>
    <property type="match status" value="1"/>
</dbReference>
<dbReference type="Gene3D" id="2.10.70.10">
    <property type="entry name" value="Complement Module, domain 1"/>
    <property type="match status" value="1"/>
</dbReference>
<dbReference type="Gene3D" id="2.60.40.10">
    <property type="entry name" value="Immunoglobulins"/>
    <property type="match status" value="1"/>
</dbReference>
<dbReference type="Gene3D" id="2.10.25.10">
    <property type="entry name" value="Laminin"/>
    <property type="match status" value="2"/>
</dbReference>
<dbReference type="Gene3D" id="3.10.100.10">
    <property type="entry name" value="Mannose-Binding Protein A, subunit A"/>
    <property type="match status" value="3"/>
</dbReference>
<dbReference type="InterPro" id="IPR001304">
    <property type="entry name" value="C-type_lectin-like"/>
</dbReference>
<dbReference type="InterPro" id="IPR016186">
    <property type="entry name" value="C-type_lectin-like/link_sf"/>
</dbReference>
<dbReference type="InterPro" id="IPR018378">
    <property type="entry name" value="C-type_lectin_CS"/>
</dbReference>
<dbReference type="InterPro" id="IPR016187">
    <property type="entry name" value="CTDL_fold"/>
</dbReference>
<dbReference type="InterPro" id="IPR001881">
    <property type="entry name" value="EGF-like_Ca-bd_dom"/>
</dbReference>
<dbReference type="InterPro" id="IPR000742">
    <property type="entry name" value="EGF-like_dom"/>
</dbReference>
<dbReference type="InterPro" id="IPR000152">
    <property type="entry name" value="EGF-type_Asp/Asn_hydroxyl_site"/>
</dbReference>
<dbReference type="InterPro" id="IPR018097">
    <property type="entry name" value="EGF_Ca-bd_CS"/>
</dbReference>
<dbReference type="InterPro" id="IPR050691">
    <property type="entry name" value="Hyaluronan_bind_Proteoglycan"/>
</dbReference>
<dbReference type="InterPro" id="IPR007110">
    <property type="entry name" value="Ig-like_dom"/>
</dbReference>
<dbReference type="InterPro" id="IPR036179">
    <property type="entry name" value="Ig-like_dom_sf"/>
</dbReference>
<dbReference type="InterPro" id="IPR013783">
    <property type="entry name" value="Ig-like_fold"/>
</dbReference>
<dbReference type="InterPro" id="IPR003599">
    <property type="entry name" value="Ig_sub"/>
</dbReference>
<dbReference type="InterPro" id="IPR013106">
    <property type="entry name" value="Ig_V-set"/>
</dbReference>
<dbReference type="InterPro" id="IPR000538">
    <property type="entry name" value="Link_dom"/>
</dbReference>
<dbReference type="InterPro" id="IPR035976">
    <property type="entry name" value="Sushi/SCR/CCP_sf"/>
</dbReference>
<dbReference type="InterPro" id="IPR000436">
    <property type="entry name" value="Sushi_SCR_CCP_dom"/>
</dbReference>
<dbReference type="PANTHER" id="PTHR22804">
    <property type="entry name" value="AGGRECAN/VERSICAN PROTEOGLYCAN"/>
    <property type="match status" value="1"/>
</dbReference>
<dbReference type="PANTHER" id="PTHR22804:SF24">
    <property type="entry name" value="NEUROCAN CORE PROTEIN"/>
    <property type="match status" value="1"/>
</dbReference>
<dbReference type="Pfam" id="PF00008">
    <property type="entry name" value="EGF"/>
    <property type="match status" value="1"/>
</dbReference>
<dbReference type="Pfam" id="PF00059">
    <property type="entry name" value="Lectin_C"/>
    <property type="match status" value="1"/>
</dbReference>
<dbReference type="Pfam" id="PF00084">
    <property type="entry name" value="Sushi"/>
    <property type="match status" value="1"/>
</dbReference>
<dbReference type="Pfam" id="PF07686">
    <property type="entry name" value="V-set"/>
    <property type="match status" value="1"/>
</dbReference>
<dbReference type="Pfam" id="PF00193">
    <property type="entry name" value="Xlink"/>
    <property type="match status" value="2"/>
</dbReference>
<dbReference type="PRINTS" id="PR01265">
    <property type="entry name" value="LINKMODULE"/>
</dbReference>
<dbReference type="SMART" id="SM00032">
    <property type="entry name" value="CCP"/>
    <property type="match status" value="1"/>
</dbReference>
<dbReference type="SMART" id="SM00034">
    <property type="entry name" value="CLECT"/>
    <property type="match status" value="1"/>
</dbReference>
<dbReference type="SMART" id="SM00181">
    <property type="entry name" value="EGF"/>
    <property type="match status" value="2"/>
</dbReference>
<dbReference type="SMART" id="SM00179">
    <property type="entry name" value="EGF_CA"/>
    <property type="match status" value="2"/>
</dbReference>
<dbReference type="SMART" id="SM00409">
    <property type="entry name" value="IG"/>
    <property type="match status" value="1"/>
</dbReference>
<dbReference type="SMART" id="SM00445">
    <property type="entry name" value="LINK"/>
    <property type="match status" value="2"/>
</dbReference>
<dbReference type="SUPFAM" id="SSF56436">
    <property type="entry name" value="C-type lectin-like"/>
    <property type="match status" value="3"/>
</dbReference>
<dbReference type="SUPFAM" id="SSF57535">
    <property type="entry name" value="Complement control module/SCR domain"/>
    <property type="match status" value="1"/>
</dbReference>
<dbReference type="SUPFAM" id="SSF57196">
    <property type="entry name" value="EGF/Laminin"/>
    <property type="match status" value="1"/>
</dbReference>
<dbReference type="SUPFAM" id="SSF48726">
    <property type="entry name" value="Immunoglobulin"/>
    <property type="match status" value="1"/>
</dbReference>
<dbReference type="PROSITE" id="PS00010">
    <property type="entry name" value="ASX_HYDROXYL"/>
    <property type="match status" value="1"/>
</dbReference>
<dbReference type="PROSITE" id="PS00615">
    <property type="entry name" value="C_TYPE_LECTIN_1"/>
    <property type="match status" value="1"/>
</dbReference>
<dbReference type="PROSITE" id="PS50041">
    <property type="entry name" value="C_TYPE_LECTIN_2"/>
    <property type="match status" value="1"/>
</dbReference>
<dbReference type="PROSITE" id="PS00022">
    <property type="entry name" value="EGF_1"/>
    <property type="match status" value="3"/>
</dbReference>
<dbReference type="PROSITE" id="PS01186">
    <property type="entry name" value="EGF_2"/>
    <property type="match status" value="1"/>
</dbReference>
<dbReference type="PROSITE" id="PS50026">
    <property type="entry name" value="EGF_3"/>
    <property type="match status" value="2"/>
</dbReference>
<dbReference type="PROSITE" id="PS01187">
    <property type="entry name" value="EGF_CA"/>
    <property type="match status" value="1"/>
</dbReference>
<dbReference type="PROSITE" id="PS50835">
    <property type="entry name" value="IG_LIKE"/>
    <property type="match status" value="1"/>
</dbReference>
<dbReference type="PROSITE" id="PS01241">
    <property type="entry name" value="LINK_1"/>
    <property type="match status" value="2"/>
</dbReference>
<dbReference type="PROSITE" id="PS50963">
    <property type="entry name" value="LINK_2"/>
    <property type="match status" value="2"/>
</dbReference>
<dbReference type="PROSITE" id="PS50923">
    <property type="entry name" value="SUSHI"/>
    <property type="match status" value="1"/>
</dbReference>
<accession>O14594</accession>
<accession>Q9UPK6</accession>
<protein>
    <recommendedName>
        <fullName>Neurocan core protein</fullName>
    </recommendedName>
    <alternativeName>
        <fullName>Chondroitin sulfate proteoglycan 3</fullName>
    </alternativeName>
</protein>
<sequence length="1321" mass="143093">MGAPFVWALGLLMLQMLLFVAGEQGTQDITDASERGLHMQKLGSGSVQAALAELVALPCLFTLQPRPSAARDAPRIKWTKVRTASGQRQDLPILVAKDNVVRVAKSWQGRVSLPSYPRRRANATLLLGPLRASDSGLYRCQVVRGIEDEQDLVPLEVTGVVFHYRSARDRYALTFAEAQEACRLSSAIIAAPRHLQAAFEDGFDNCDAGWLSDRTVRYPITQSRPGCYGDRSSLPGVRSYGRRNPQELYDVYCFARELGGEVFYVGPARRLTLAGARAQCRRQGAALASVGQLHLAWHEGLDQCDPGWLADGSVRYPIQTPRRRCGGPAPGVRTVYRFANRTGFPSPAERFDAYCFRAHHPTSQHGDLETPSSGDEGEILSAEGPPVRELEPTLEEEEVVTPDFQEPLVSSGEEETLILEEKQESQQTLSPTPGDPMLASWPTGEVWLSTVAPSPSDMGAGTAASSHTEVAPTDPMPRRRGRFKGLNGRYFQQQEPEPGLQGGMEASAQPPTSEAAVNQMEPPLAMAVTEMLGSGQSRSPWADLTNEVDMPGAGSAGGKSSPEPWLWPPTMVPPSISGHSRAPVLELEKAEGPSARPATPDLFWSPLEATVSAPSPAPWEAFPVATSPDLPMMAMLRGPKEWMLPHPTPISTEANRVEAHGEATATAPPSPAAETKVYSLPLSLTPTGQGGEAMPTTPESPRADFRETGETSPAQVNKAEHSSSSPWPSVNRNVAVGFVPTETATEPTGLRGIPGSESGVFDTAESPTSGLQATVDEVQDPWPSVYSKGLDASSPSAPLGSPGVFLVPKVTPNLEPWVATDEGPTVNPMDSTVTPAPSDASGIWEPGSQVFEEAESTTLSPQVALDTSIVTPLTTLEQGDKVGVPAMSTLGSSSSQPHPEPEDQVETQGTSGASVPPHQSSPLGKPAVPPGTPTAASVGESASVSSGEPTVPWDPSSTLLPVTLGIEDFELEVLAGSPGVESFWEEVASGEEPALPGTPMNAGAEEVHSDPCENNPCLHGGTCNANGTMYGCSCDQGFAGENCEIDIDDCLCSPCENGGTCIDEVNGFVCLCLPSYGGSFCEKDTEGCDRGWHKFQGHCYRYFAHRRAWEDAEKDCRRRSGHLTSVHSPEEHSFINSFGHENTWIGLNDRIVERDFQWTDNTGLQFENWRENQPDNFFAGGEDCVVMVAHESGRWNDVPCNYNLPYVCKKGTVLCGPPPAVENASLIGARKAKYNVHATVRYQCNEGFAQHHVATIRCRSNGKWDRPQIVCTKPRRSHRMRRHHHHHQHHHQHHHHKSRKERRKHKKHPTEDWEKDEGNFC</sequence>
<organism>
    <name type="scientific">Homo sapiens</name>
    <name type="common">Human</name>
    <dbReference type="NCBI Taxonomy" id="9606"/>
    <lineage>
        <taxon>Eukaryota</taxon>
        <taxon>Metazoa</taxon>
        <taxon>Chordata</taxon>
        <taxon>Craniata</taxon>
        <taxon>Vertebrata</taxon>
        <taxon>Euteleostomi</taxon>
        <taxon>Mammalia</taxon>
        <taxon>Eutheria</taxon>
        <taxon>Euarchontoglires</taxon>
        <taxon>Primates</taxon>
        <taxon>Haplorrhini</taxon>
        <taxon>Catarrhini</taxon>
        <taxon>Hominidae</taxon>
        <taxon>Homo</taxon>
    </lineage>
</organism>
<name>NCAN_HUMAN</name>
<keyword id="KW-0106">Calcium</keyword>
<keyword id="KW-0130">Cell adhesion</keyword>
<keyword id="KW-1015">Disulfide bond</keyword>
<keyword id="KW-0245">EGF-like domain</keyword>
<keyword id="KW-0325">Glycoprotein</keyword>
<keyword id="KW-0373">Hyaluronic acid</keyword>
<keyword id="KW-0393">Immunoglobulin domain</keyword>
<keyword id="KW-0430">Lectin</keyword>
<keyword id="KW-0654">Proteoglycan</keyword>
<keyword id="KW-1267">Proteomics identification</keyword>
<keyword id="KW-1185">Reference proteome</keyword>
<keyword id="KW-0677">Repeat</keyword>
<keyword id="KW-0964">Secreted</keyword>
<keyword id="KW-0732">Signal</keyword>
<keyword id="KW-0768">Sushi</keyword>